<dbReference type="EC" id="6.1.1.14" evidence="1"/>
<dbReference type="EMBL" id="BA000037">
    <property type="protein sequence ID" value="BAC92785.1"/>
    <property type="molecule type" value="Genomic_DNA"/>
</dbReference>
<dbReference type="RefSeq" id="WP_011079026.1">
    <property type="nucleotide sequence ID" value="NC_005139.1"/>
</dbReference>
<dbReference type="SMR" id="Q7MQI7"/>
<dbReference type="STRING" id="672.VV93_v1c00100"/>
<dbReference type="KEGG" id="vvy:VV0021"/>
<dbReference type="eggNOG" id="COG0752">
    <property type="taxonomic scope" value="Bacteria"/>
</dbReference>
<dbReference type="HOGENOM" id="CLU_057066_1_0_6"/>
<dbReference type="Proteomes" id="UP000002675">
    <property type="component" value="Chromosome I"/>
</dbReference>
<dbReference type="GO" id="GO:0005829">
    <property type="term" value="C:cytosol"/>
    <property type="evidence" value="ECO:0007669"/>
    <property type="project" value="TreeGrafter"/>
</dbReference>
<dbReference type="GO" id="GO:0005524">
    <property type="term" value="F:ATP binding"/>
    <property type="evidence" value="ECO:0007669"/>
    <property type="project" value="UniProtKB-UniRule"/>
</dbReference>
<dbReference type="GO" id="GO:0004820">
    <property type="term" value="F:glycine-tRNA ligase activity"/>
    <property type="evidence" value="ECO:0007669"/>
    <property type="project" value="UniProtKB-UniRule"/>
</dbReference>
<dbReference type="GO" id="GO:0006426">
    <property type="term" value="P:glycyl-tRNA aminoacylation"/>
    <property type="evidence" value="ECO:0007669"/>
    <property type="project" value="UniProtKB-UniRule"/>
</dbReference>
<dbReference type="CDD" id="cd00733">
    <property type="entry name" value="GlyRS_alpha_core"/>
    <property type="match status" value="1"/>
</dbReference>
<dbReference type="FunFam" id="3.30.930.10:FF:000006">
    <property type="entry name" value="Glycine--tRNA ligase alpha subunit"/>
    <property type="match status" value="1"/>
</dbReference>
<dbReference type="Gene3D" id="3.30.930.10">
    <property type="entry name" value="Bira Bifunctional Protein, Domain 2"/>
    <property type="match status" value="1"/>
</dbReference>
<dbReference type="Gene3D" id="1.20.58.180">
    <property type="entry name" value="Class II aaRS and biotin synthetases, domain 2"/>
    <property type="match status" value="1"/>
</dbReference>
<dbReference type="HAMAP" id="MF_00254">
    <property type="entry name" value="Gly_tRNA_synth_alpha"/>
    <property type="match status" value="1"/>
</dbReference>
<dbReference type="InterPro" id="IPR045864">
    <property type="entry name" value="aa-tRNA-synth_II/BPL/LPL"/>
</dbReference>
<dbReference type="InterPro" id="IPR006194">
    <property type="entry name" value="Gly-tRNA-synth_heterodimer"/>
</dbReference>
<dbReference type="InterPro" id="IPR002310">
    <property type="entry name" value="Gly-tRNA_ligase_asu"/>
</dbReference>
<dbReference type="NCBIfam" id="TIGR00388">
    <property type="entry name" value="glyQ"/>
    <property type="match status" value="1"/>
</dbReference>
<dbReference type="NCBIfam" id="NF006827">
    <property type="entry name" value="PRK09348.1"/>
    <property type="match status" value="1"/>
</dbReference>
<dbReference type="PANTHER" id="PTHR30075:SF2">
    <property type="entry name" value="GLYCINE--TRNA LIGASE, CHLOROPLASTIC_MITOCHONDRIAL 2"/>
    <property type="match status" value="1"/>
</dbReference>
<dbReference type="PANTHER" id="PTHR30075">
    <property type="entry name" value="GLYCYL-TRNA SYNTHETASE"/>
    <property type="match status" value="1"/>
</dbReference>
<dbReference type="Pfam" id="PF02091">
    <property type="entry name" value="tRNA-synt_2e"/>
    <property type="match status" value="1"/>
</dbReference>
<dbReference type="PRINTS" id="PR01044">
    <property type="entry name" value="TRNASYNTHGA"/>
</dbReference>
<dbReference type="SUPFAM" id="SSF55681">
    <property type="entry name" value="Class II aaRS and biotin synthetases"/>
    <property type="match status" value="1"/>
</dbReference>
<dbReference type="PROSITE" id="PS50861">
    <property type="entry name" value="AA_TRNA_LIGASE_II_GLYAB"/>
    <property type="match status" value="1"/>
</dbReference>
<sequence length="305" mass="35006">MQKYDIKTFQGMILALQDYWAQNGCTIVQPLDMEVGAGTSHPMTCLRALGPEPMSTAYVQPSRRPTDGRYGENPNRLQHYYQFQVALKPSPDNIQELYLGSLEVLGIDPLVHDIRFVEDNWENPTLGAWGLGWEVWLNGMEVTQFTYFQQVGGLECKPVTGEITYGIERLAMYIQEVDSVYDLTWNIAPDGSKVTYGDIFHQNEVEQSTYNFEHADVDFLFSFFEQCEKECQQLLELEKPLPLPAYERILKAAHAFNLLDARKAISVTERQRYILRIRNLTKSVAEAYYASREALGFPMCKKEQA</sequence>
<gene>
    <name evidence="1" type="primary">glyQ</name>
    <name type="ordered locus">VV0021</name>
</gene>
<feature type="chain" id="PRO_0000072881" description="Glycine--tRNA ligase alpha subunit">
    <location>
        <begin position="1"/>
        <end position="305"/>
    </location>
</feature>
<protein>
    <recommendedName>
        <fullName evidence="1">Glycine--tRNA ligase alpha subunit</fullName>
        <ecNumber evidence="1">6.1.1.14</ecNumber>
    </recommendedName>
    <alternativeName>
        <fullName evidence="1">Glycyl-tRNA synthetase alpha subunit</fullName>
        <shortName evidence="1">GlyRS</shortName>
    </alternativeName>
</protein>
<organism>
    <name type="scientific">Vibrio vulnificus (strain YJ016)</name>
    <dbReference type="NCBI Taxonomy" id="196600"/>
    <lineage>
        <taxon>Bacteria</taxon>
        <taxon>Pseudomonadati</taxon>
        <taxon>Pseudomonadota</taxon>
        <taxon>Gammaproteobacteria</taxon>
        <taxon>Vibrionales</taxon>
        <taxon>Vibrionaceae</taxon>
        <taxon>Vibrio</taxon>
    </lineage>
</organism>
<accession>Q7MQI7</accession>
<name>SYGA_VIBVY</name>
<evidence type="ECO:0000255" key="1">
    <source>
        <dbReference type="HAMAP-Rule" id="MF_00254"/>
    </source>
</evidence>
<comment type="catalytic activity">
    <reaction evidence="1">
        <text>tRNA(Gly) + glycine + ATP = glycyl-tRNA(Gly) + AMP + diphosphate</text>
        <dbReference type="Rhea" id="RHEA:16013"/>
        <dbReference type="Rhea" id="RHEA-COMP:9664"/>
        <dbReference type="Rhea" id="RHEA-COMP:9683"/>
        <dbReference type="ChEBI" id="CHEBI:30616"/>
        <dbReference type="ChEBI" id="CHEBI:33019"/>
        <dbReference type="ChEBI" id="CHEBI:57305"/>
        <dbReference type="ChEBI" id="CHEBI:78442"/>
        <dbReference type="ChEBI" id="CHEBI:78522"/>
        <dbReference type="ChEBI" id="CHEBI:456215"/>
        <dbReference type="EC" id="6.1.1.14"/>
    </reaction>
</comment>
<comment type="subunit">
    <text evidence="1">Tetramer of two alpha and two beta subunits.</text>
</comment>
<comment type="subcellular location">
    <subcellularLocation>
        <location evidence="1">Cytoplasm</location>
    </subcellularLocation>
</comment>
<comment type="similarity">
    <text evidence="1">Belongs to the class-II aminoacyl-tRNA synthetase family.</text>
</comment>
<proteinExistence type="inferred from homology"/>
<reference key="1">
    <citation type="journal article" date="2003" name="Genome Res.">
        <title>Comparative genome analysis of Vibrio vulnificus, a marine pathogen.</title>
        <authorList>
            <person name="Chen C.-Y."/>
            <person name="Wu K.-M."/>
            <person name="Chang Y.-C."/>
            <person name="Chang C.-H."/>
            <person name="Tsai H.-C."/>
            <person name="Liao T.-L."/>
            <person name="Liu Y.-M."/>
            <person name="Chen H.-J."/>
            <person name="Shen A.B.-T."/>
            <person name="Li J.-C."/>
            <person name="Su T.-L."/>
            <person name="Shao C.-P."/>
            <person name="Lee C.-T."/>
            <person name="Hor L.-I."/>
            <person name="Tsai S.-F."/>
        </authorList>
    </citation>
    <scope>NUCLEOTIDE SEQUENCE [LARGE SCALE GENOMIC DNA]</scope>
    <source>
        <strain>YJ016</strain>
    </source>
</reference>
<keyword id="KW-0030">Aminoacyl-tRNA synthetase</keyword>
<keyword id="KW-0067">ATP-binding</keyword>
<keyword id="KW-0963">Cytoplasm</keyword>
<keyword id="KW-0436">Ligase</keyword>
<keyword id="KW-0547">Nucleotide-binding</keyword>
<keyword id="KW-0648">Protein biosynthesis</keyword>